<name>MIAA_BIFA0</name>
<keyword id="KW-0067">ATP-binding</keyword>
<keyword id="KW-0460">Magnesium</keyword>
<keyword id="KW-0547">Nucleotide-binding</keyword>
<keyword id="KW-1185">Reference proteome</keyword>
<keyword id="KW-0808">Transferase</keyword>
<keyword id="KW-0819">tRNA processing</keyword>
<comment type="function">
    <text evidence="1">Catalyzes the transfer of a dimethylallyl group onto the adenine at position 37 in tRNAs that read codons beginning with uridine, leading to the formation of N6-(dimethylallyl)adenosine (i(6)A).</text>
</comment>
<comment type="catalytic activity">
    <reaction evidence="1">
        <text>adenosine(37) in tRNA + dimethylallyl diphosphate = N(6)-dimethylallyladenosine(37) in tRNA + diphosphate</text>
        <dbReference type="Rhea" id="RHEA:26482"/>
        <dbReference type="Rhea" id="RHEA-COMP:10162"/>
        <dbReference type="Rhea" id="RHEA-COMP:10375"/>
        <dbReference type="ChEBI" id="CHEBI:33019"/>
        <dbReference type="ChEBI" id="CHEBI:57623"/>
        <dbReference type="ChEBI" id="CHEBI:74411"/>
        <dbReference type="ChEBI" id="CHEBI:74415"/>
        <dbReference type="EC" id="2.5.1.75"/>
    </reaction>
</comment>
<comment type="cofactor">
    <cofactor evidence="1">
        <name>Mg(2+)</name>
        <dbReference type="ChEBI" id="CHEBI:18420"/>
    </cofactor>
</comment>
<comment type="subunit">
    <text evidence="1">Monomer.</text>
</comment>
<comment type="similarity">
    <text evidence="1">Belongs to the IPP transferase family.</text>
</comment>
<reference key="1">
    <citation type="journal article" date="2009" name="J. Bacteriol.">
        <title>Genome sequence of the probiotic bacterium Bifidobacterium animalis subsp. lactis AD011.</title>
        <authorList>
            <person name="Kim J.F."/>
            <person name="Jeong H."/>
            <person name="Yu D.S."/>
            <person name="Choi S.-H."/>
            <person name="Hur C.-G."/>
            <person name="Park M.-S."/>
            <person name="Yoon S.H."/>
            <person name="Kim D.-W."/>
            <person name="Ji G.E."/>
            <person name="Park H.-S."/>
            <person name="Oh T.K."/>
        </authorList>
    </citation>
    <scope>NUCLEOTIDE SEQUENCE [LARGE SCALE GENOMIC DNA]</scope>
    <source>
        <strain>AD011</strain>
    </source>
</reference>
<organism>
    <name type="scientific">Bifidobacterium animalis subsp. lactis (strain AD011)</name>
    <dbReference type="NCBI Taxonomy" id="442563"/>
    <lineage>
        <taxon>Bacteria</taxon>
        <taxon>Bacillati</taxon>
        <taxon>Actinomycetota</taxon>
        <taxon>Actinomycetes</taxon>
        <taxon>Bifidobacteriales</taxon>
        <taxon>Bifidobacteriaceae</taxon>
        <taxon>Bifidobacterium</taxon>
    </lineage>
</organism>
<dbReference type="EC" id="2.5.1.75" evidence="1"/>
<dbReference type="EMBL" id="CP001213">
    <property type="protein sequence ID" value="ACL29220.1"/>
    <property type="molecule type" value="Genomic_DNA"/>
</dbReference>
<dbReference type="RefSeq" id="WP_004217584.1">
    <property type="nucleotide sequence ID" value="NC_011835.1"/>
</dbReference>
<dbReference type="SMR" id="B8DT91"/>
<dbReference type="STRING" id="442563.BLA_0928"/>
<dbReference type="GeneID" id="29696076"/>
<dbReference type="KEGG" id="bla:BLA_0928"/>
<dbReference type="PATRIC" id="fig|442563.4.peg.971"/>
<dbReference type="HOGENOM" id="CLU_032616_0_1_11"/>
<dbReference type="Proteomes" id="UP000002456">
    <property type="component" value="Chromosome"/>
</dbReference>
<dbReference type="GO" id="GO:0005524">
    <property type="term" value="F:ATP binding"/>
    <property type="evidence" value="ECO:0007669"/>
    <property type="project" value="UniProtKB-UniRule"/>
</dbReference>
<dbReference type="GO" id="GO:0052381">
    <property type="term" value="F:tRNA dimethylallyltransferase activity"/>
    <property type="evidence" value="ECO:0007669"/>
    <property type="project" value="UniProtKB-UniRule"/>
</dbReference>
<dbReference type="GO" id="GO:0006400">
    <property type="term" value="P:tRNA modification"/>
    <property type="evidence" value="ECO:0007669"/>
    <property type="project" value="TreeGrafter"/>
</dbReference>
<dbReference type="FunFam" id="1.10.20.140:FF:000001">
    <property type="entry name" value="tRNA dimethylallyltransferase"/>
    <property type="match status" value="1"/>
</dbReference>
<dbReference type="Gene3D" id="1.10.20.140">
    <property type="match status" value="1"/>
</dbReference>
<dbReference type="Gene3D" id="3.40.50.300">
    <property type="entry name" value="P-loop containing nucleotide triphosphate hydrolases"/>
    <property type="match status" value="1"/>
</dbReference>
<dbReference type="HAMAP" id="MF_00185">
    <property type="entry name" value="IPP_trans"/>
    <property type="match status" value="1"/>
</dbReference>
<dbReference type="InterPro" id="IPR039657">
    <property type="entry name" value="Dimethylallyltransferase"/>
</dbReference>
<dbReference type="InterPro" id="IPR018022">
    <property type="entry name" value="IPT"/>
</dbReference>
<dbReference type="InterPro" id="IPR027417">
    <property type="entry name" value="P-loop_NTPase"/>
</dbReference>
<dbReference type="NCBIfam" id="TIGR00174">
    <property type="entry name" value="miaA"/>
    <property type="match status" value="1"/>
</dbReference>
<dbReference type="PANTHER" id="PTHR11088">
    <property type="entry name" value="TRNA DIMETHYLALLYLTRANSFERASE"/>
    <property type="match status" value="1"/>
</dbReference>
<dbReference type="PANTHER" id="PTHR11088:SF60">
    <property type="entry name" value="TRNA DIMETHYLALLYLTRANSFERASE"/>
    <property type="match status" value="1"/>
</dbReference>
<dbReference type="Pfam" id="PF01715">
    <property type="entry name" value="IPPT"/>
    <property type="match status" value="1"/>
</dbReference>
<dbReference type="SUPFAM" id="SSF52540">
    <property type="entry name" value="P-loop containing nucleoside triphosphate hydrolases"/>
    <property type="match status" value="1"/>
</dbReference>
<accession>B8DT91</accession>
<feature type="chain" id="PRO_0000377086" description="tRNA dimethylallyltransferase">
    <location>
        <begin position="1"/>
        <end position="344"/>
    </location>
</feature>
<feature type="binding site" evidence="1">
    <location>
        <begin position="19"/>
        <end position="26"/>
    </location>
    <ligand>
        <name>ATP</name>
        <dbReference type="ChEBI" id="CHEBI:30616"/>
    </ligand>
</feature>
<feature type="binding site" evidence="1">
    <location>
        <begin position="21"/>
        <end position="26"/>
    </location>
    <ligand>
        <name>substrate</name>
    </ligand>
</feature>
<feature type="site" description="Interaction with substrate tRNA" evidence="1">
    <location>
        <position position="115"/>
    </location>
</feature>
<feature type="site" description="Interaction with substrate tRNA" evidence="1">
    <location>
        <position position="136"/>
    </location>
</feature>
<protein>
    <recommendedName>
        <fullName evidence="1">tRNA dimethylallyltransferase</fullName>
        <ecNumber evidence="1">2.5.1.75</ecNumber>
    </recommendedName>
    <alternativeName>
        <fullName evidence="1">Dimethylallyl diphosphate:tRNA dimethylallyltransferase</fullName>
        <shortName evidence="1">DMAPP:tRNA dimethylallyltransferase</shortName>
        <shortName evidence="1">DMATase</shortName>
    </alternativeName>
    <alternativeName>
        <fullName evidence="1">Isopentenyl-diphosphate:tRNA isopentenyltransferase</fullName>
        <shortName evidence="1">IPP transferase</shortName>
        <shortName evidence="1">IPPT</shortName>
        <shortName evidence="1">IPTase</shortName>
    </alternativeName>
</protein>
<gene>
    <name evidence="1" type="primary">miaA</name>
    <name type="ordered locus">BLA_0928</name>
</gene>
<proteinExistence type="inferred from homology"/>
<sequence>MPSAGVERHDGARVISIVGPTASGKTGLGIAIARRLADRGERAEIVNADAYQMYRGMDIGTAKASDEERAAVRHHLLDVIEPSETMSVARFQQMARETIADLKSRGIRPILVGGSGLYARAAIDDISFPGTDPQIREHLEERERTEGATALFRELAVKDPQAAEHMDPRNPRRIIRALEVIEVTGKPYSATLPRYRYVIPSVQLGLDLDRADLDKRIDVRTRQMFDGGFVDEVARLRSHLGPTAARALGYQQVIDHLDGLVDLDDTMADIAQKTKRLARKQMGWFGRDPRIHWLSALNPALVDNAMAVIDHADAGDYDAIDMHAQEYVQHHLGDIRRPSGAGPV</sequence>
<evidence type="ECO:0000255" key="1">
    <source>
        <dbReference type="HAMAP-Rule" id="MF_00185"/>
    </source>
</evidence>